<organism>
    <name type="scientific">Escherichia coli O8 (strain IAI1)</name>
    <dbReference type="NCBI Taxonomy" id="585034"/>
    <lineage>
        <taxon>Bacteria</taxon>
        <taxon>Pseudomonadati</taxon>
        <taxon>Pseudomonadota</taxon>
        <taxon>Gammaproteobacteria</taxon>
        <taxon>Enterobacterales</taxon>
        <taxon>Enterobacteriaceae</taxon>
        <taxon>Escherichia</taxon>
    </lineage>
</organism>
<proteinExistence type="inferred from homology"/>
<gene>
    <name evidence="1" type="primary">ibpA</name>
    <name type="ordered locus">ECIAI1_3865</name>
</gene>
<reference key="1">
    <citation type="journal article" date="2009" name="PLoS Genet.">
        <title>Organised genome dynamics in the Escherichia coli species results in highly diverse adaptive paths.</title>
        <authorList>
            <person name="Touchon M."/>
            <person name="Hoede C."/>
            <person name="Tenaillon O."/>
            <person name="Barbe V."/>
            <person name="Baeriswyl S."/>
            <person name="Bidet P."/>
            <person name="Bingen E."/>
            <person name="Bonacorsi S."/>
            <person name="Bouchier C."/>
            <person name="Bouvet O."/>
            <person name="Calteau A."/>
            <person name="Chiapello H."/>
            <person name="Clermont O."/>
            <person name="Cruveiller S."/>
            <person name="Danchin A."/>
            <person name="Diard M."/>
            <person name="Dossat C."/>
            <person name="Karoui M.E."/>
            <person name="Frapy E."/>
            <person name="Garry L."/>
            <person name="Ghigo J.M."/>
            <person name="Gilles A.M."/>
            <person name="Johnson J."/>
            <person name="Le Bouguenec C."/>
            <person name="Lescat M."/>
            <person name="Mangenot S."/>
            <person name="Martinez-Jehanne V."/>
            <person name="Matic I."/>
            <person name="Nassif X."/>
            <person name="Oztas S."/>
            <person name="Petit M.A."/>
            <person name="Pichon C."/>
            <person name="Rouy Z."/>
            <person name="Ruf C.S."/>
            <person name="Schneider D."/>
            <person name="Tourret J."/>
            <person name="Vacherie B."/>
            <person name="Vallenet D."/>
            <person name="Medigue C."/>
            <person name="Rocha E.P.C."/>
            <person name="Denamur E."/>
        </authorList>
    </citation>
    <scope>NUCLEOTIDE SEQUENCE [LARGE SCALE GENOMIC DNA]</scope>
    <source>
        <strain>IAI1</strain>
    </source>
</reference>
<protein>
    <recommendedName>
        <fullName evidence="1">Small heat shock protein IbpA</fullName>
    </recommendedName>
    <alternativeName>
        <fullName evidence="1">16 kDa heat shock protein A</fullName>
    </alternativeName>
</protein>
<feature type="chain" id="PRO_1000189082" description="Small heat shock protein IbpA">
    <location>
        <begin position="1"/>
        <end position="137"/>
    </location>
</feature>
<feature type="domain" description="sHSP" evidence="2">
    <location>
        <begin position="28"/>
        <end position="137"/>
    </location>
</feature>
<accession>B7M4H6</accession>
<dbReference type="EMBL" id="CU928160">
    <property type="protein sequence ID" value="CAR00660.1"/>
    <property type="molecule type" value="Genomic_DNA"/>
</dbReference>
<dbReference type="RefSeq" id="WP_001243437.1">
    <property type="nucleotide sequence ID" value="NC_011741.1"/>
</dbReference>
<dbReference type="SMR" id="B7M4H6"/>
<dbReference type="GeneID" id="93778428"/>
<dbReference type="KEGG" id="ecr:ECIAI1_3865"/>
<dbReference type="HOGENOM" id="CLU_046737_4_2_6"/>
<dbReference type="GO" id="GO:0005737">
    <property type="term" value="C:cytoplasm"/>
    <property type="evidence" value="ECO:0007669"/>
    <property type="project" value="UniProtKB-SubCell"/>
</dbReference>
<dbReference type="GO" id="GO:0050821">
    <property type="term" value="P:protein stabilization"/>
    <property type="evidence" value="ECO:0007669"/>
    <property type="project" value="UniProtKB-UniRule"/>
</dbReference>
<dbReference type="CDD" id="cd06470">
    <property type="entry name" value="ACD_IbpA-B_like"/>
    <property type="match status" value="1"/>
</dbReference>
<dbReference type="FunFam" id="2.60.40.790:FF:000002">
    <property type="entry name" value="Small heat shock protein IbpA"/>
    <property type="match status" value="1"/>
</dbReference>
<dbReference type="Gene3D" id="2.60.40.790">
    <property type="match status" value="1"/>
</dbReference>
<dbReference type="HAMAP" id="MF_02000">
    <property type="entry name" value="HSP20_IbpA"/>
    <property type="match status" value="1"/>
</dbReference>
<dbReference type="InterPro" id="IPR002068">
    <property type="entry name" value="A-crystallin/Hsp20_dom"/>
</dbReference>
<dbReference type="InterPro" id="IPR037913">
    <property type="entry name" value="ACD_IbpA/B"/>
</dbReference>
<dbReference type="InterPro" id="IPR008978">
    <property type="entry name" value="HSP20-like_chaperone"/>
</dbReference>
<dbReference type="InterPro" id="IPR023728">
    <property type="entry name" value="HSP20_IbpA"/>
</dbReference>
<dbReference type="NCBIfam" id="NF008013">
    <property type="entry name" value="PRK10743.1"/>
    <property type="match status" value="1"/>
</dbReference>
<dbReference type="PANTHER" id="PTHR47062">
    <property type="match status" value="1"/>
</dbReference>
<dbReference type="PANTHER" id="PTHR47062:SF1">
    <property type="entry name" value="SMALL HEAT SHOCK PROTEIN IBPA"/>
    <property type="match status" value="1"/>
</dbReference>
<dbReference type="Pfam" id="PF00011">
    <property type="entry name" value="HSP20"/>
    <property type="match status" value="1"/>
</dbReference>
<dbReference type="SUPFAM" id="SSF49764">
    <property type="entry name" value="HSP20-like chaperones"/>
    <property type="match status" value="1"/>
</dbReference>
<dbReference type="PROSITE" id="PS01031">
    <property type="entry name" value="SHSP"/>
    <property type="match status" value="1"/>
</dbReference>
<name>IBPA_ECO8A</name>
<evidence type="ECO:0000255" key="1">
    <source>
        <dbReference type="HAMAP-Rule" id="MF_02000"/>
    </source>
</evidence>
<evidence type="ECO:0000255" key="2">
    <source>
        <dbReference type="PROSITE-ProRule" id="PRU00285"/>
    </source>
</evidence>
<sequence>MRNFDLSPLYRSAIGFDRLFNHLENNQSQSNGGYPPYNVELVDENHYRIAIAVAGFAESELEITAQDNLLVVKGAHADEQKERTYLYQGIAERNFERKFQLAENIHVRGANLVNGLLYIDLERVIPEAKKPRRIEIN</sequence>
<keyword id="KW-0143">Chaperone</keyword>
<keyword id="KW-0963">Cytoplasm</keyword>
<keyword id="KW-0346">Stress response</keyword>
<comment type="function">
    <text evidence="1">Associates with aggregated proteins, together with IbpB, to stabilize and protect them from irreversible denaturation and extensive proteolysis during heat shock and oxidative stress. Aggregated proteins bound to the IbpAB complex are more efficiently refolded and reactivated by the ATP-dependent chaperone systems ClpB and DnaK/DnaJ/GrpE. Its activity is ATP-independent.</text>
</comment>
<comment type="subunit">
    <text evidence="1">Monomer. Forms homomultimers of about 100-150 subunits at optimal growth temperatures. Conformation changes to monomers at high temperatures or high ionic concentrations.</text>
</comment>
<comment type="subcellular location">
    <subcellularLocation>
        <location evidence="1">Cytoplasm</location>
    </subcellularLocation>
</comment>
<comment type="similarity">
    <text evidence="1 2">Belongs to the small heat shock protein (HSP20) family.</text>
</comment>